<proteinExistence type="evidence at protein level"/>
<dbReference type="EC" id="3.13.1.1"/>
<dbReference type="EMBL" id="AY192559">
    <property type="protein sequence ID" value="AAO39667.1"/>
    <property type="molecule type" value="mRNA"/>
</dbReference>
<dbReference type="SMR" id="Q84KI6"/>
<dbReference type="BRENDA" id="3.13.1.1">
    <property type="organism ID" value="5812"/>
</dbReference>
<dbReference type="Proteomes" id="UP001155700">
    <property type="component" value="Unplaced"/>
</dbReference>
<dbReference type="GO" id="GO:0009570">
    <property type="term" value="C:chloroplast stroma"/>
    <property type="evidence" value="ECO:0000314"/>
    <property type="project" value="CAFA"/>
</dbReference>
<dbReference type="GO" id="GO:0016020">
    <property type="term" value="C:membrane"/>
    <property type="evidence" value="ECO:0007669"/>
    <property type="project" value="GOC"/>
</dbReference>
<dbReference type="GO" id="GO:0019899">
    <property type="term" value="F:enzyme binding"/>
    <property type="evidence" value="ECO:0000353"/>
    <property type="project" value="CAFA"/>
</dbReference>
<dbReference type="GO" id="GO:0101016">
    <property type="term" value="F:FMN-binding domain binding"/>
    <property type="evidence" value="ECO:0000353"/>
    <property type="project" value="CAFA"/>
</dbReference>
<dbReference type="GO" id="GO:0046507">
    <property type="term" value="F:UDPsulfoquinovose synthase activity"/>
    <property type="evidence" value="ECO:0000318"/>
    <property type="project" value="GO_Central"/>
</dbReference>
<dbReference type="GO" id="GO:0009247">
    <property type="term" value="P:glycolipid biosynthetic process"/>
    <property type="evidence" value="ECO:0000318"/>
    <property type="project" value="GO_Central"/>
</dbReference>
<dbReference type="GO" id="GO:0046506">
    <property type="term" value="P:sulfolipid biosynthetic process"/>
    <property type="evidence" value="ECO:0000318"/>
    <property type="project" value="GO_Central"/>
</dbReference>
<dbReference type="CDD" id="cd05255">
    <property type="entry name" value="SQD1_like_SDR_e"/>
    <property type="match status" value="1"/>
</dbReference>
<dbReference type="Gene3D" id="3.40.50.720">
    <property type="entry name" value="NAD(P)-binding Rossmann-like Domain"/>
    <property type="match status" value="1"/>
</dbReference>
<dbReference type="Gene3D" id="3.90.25.10">
    <property type="entry name" value="UDP-galactose 4-epimerase, domain 1"/>
    <property type="match status" value="1"/>
</dbReference>
<dbReference type="InterPro" id="IPR001509">
    <property type="entry name" value="Epimerase_deHydtase"/>
</dbReference>
<dbReference type="InterPro" id="IPR036291">
    <property type="entry name" value="NAD(P)-bd_dom_sf"/>
</dbReference>
<dbReference type="PANTHER" id="PTHR43000">
    <property type="entry name" value="DTDP-D-GLUCOSE 4,6-DEHYDRATASE-RELATED"/>
    <property type="match status" value="1"/>
</dbReference>
<dbReference type="Pfam" id="PF01370">
    <property type="entry name" value="Epimerase"/>
    <property type="match status" value="1"/>
</dbReference>
<dbReference type="SUPFAM" id="SSF51735">
    <property type="entry name" value="NAD(P)-binding Rossmann-fold domains"/>
    <property type="match status" value="1"/>
</dbReference>
<name>SQD1_SPIOL</name>
<feature type="transit peptide" description="Chloroplast" evidence="2">
    <location>
        <begin position="1"/>
        <end position="61"/>
    </location>
</feature>
<feature type="chain" id="PRO_0000010470" description="UDP-sulfoquinovose synthase, chloroplastic">
    <location>
        <begin position="62"/>
        <end position="482"/>
    </location>
</feature>
<feature type="active site" evidence="1">
    <location>
        <position position="233"/>
    </location>
</feature>
<feature type="active site" description="Proton acceptor" evidence="1">
    <location>
        <position position="270"/>
    </location>
</feature>
<feature type="active site" evidence="1">
    <location>
        <position position="274"/>
    </location>
</feature>
<feature type="binding site" evidence="1">
    <location>
        <begin position="100"/>
        <end position="101"/>
    </location>
    <ligand>
        <name>NAD(+)</name>
        <dbReference type="ChEBI" id="CHEBI:57540"/>
    </ligand>
</feature>
<feature type="binding site" evidence="1">
    <location>
        <begin position="120"/>
        <end position="124"/>
    </location>
    <ligand>
        <name>NAD(+)</name>
        <dbReference type="ChEBI" id="CHEBI:57540"/>
    </ligand>
</feature>
<feature type="binding site" evidence="1">
    <location>
        <begin position="163"/>
        <end position="164"/>
    </location>
    <ligand>
        <name>NAD(+)</name>
        <dbReference type="ChEBI" id="CHEBI:57540"/>
    </ligand>
</feature>
<feature type="binding site" evidence="1">
    <location>
        <position position="189"/>
    </location>
    <ligand>
        <name>NAD(+)</name>
        <dbReference type="ChEBI" id="CHEBI:57540"/>
    </ligand>
</feature>
<feature type="binding site" evidence="1">
    <location>
        <position position="189"/>
    </location>
    <ligand>
        <name>substrate</name>
    </ligand>
</feature>
<feature type="binding site" evidence="1">
    <location>
        <position position="207"/>
    </location>
    <ligand>
        <name>NAD(+)</name>
        <dbReference type="ChEBI" id="CHEBI:57540"/>
    </ligand>
</feature>
<feature type="binding site" evidence="1">
    <location>
        <position position="233"/>
    </location>
    <ligand>
        <name>substrate</name>
    </ligand>
</feature>
<feature type="binding site" evidence="1">
    <location>
        <position position="270"/>
    </location>
    <ligand>
        <name>NAD(+)</name>
        <dbReference type="ChEBI" id="CHEBI:57540"/>
    </ligand>
</feature>
<feature type="binding site" evidence="1">
    <location>
        <position position="270"/>
    </location>
    <ligand>
        <name>substrate</name>
    </ligand>
</feature>
<feature type="binding site" evidence="1">
    <location>
        <position position="274"/>
    </location>
    <ligand>
        <name>NAD(+)</name>
        <dbReference type="ChEBI" id="CHEBI:57540"/>
    </ligand>
</feature>
<feature type="binding site" evidence="1">
    <location>
        <position position="297"/>
    </location>
    <ligand>
        <name>substrate</name>
    </ligand>
</feature>
<feature type="binding site" evidence="1">
    <location>
        <position position="300"/>
    </location>
    <ligand>
        <name>NAD(+)</name>
        <dbReference type="ChEBI" id="CHEBI:57540"/>
    </ligand>
</feature>
<feature type="binding site" evidence="1">
    <location>
        <begin position="327"/>
        <end position="330"/>
    </location>
    <ligand>
        <name>substrate</name>
    </ligand>
</feature>
<feature type="binding site" evidence="1">
    <location>
        <begin position="342"/>
        <end position="344"/>
    </location>
    <ligand>
        <name>substrate</name>
    </ligand>
</feature>
<feature type="binding site" evidence="1">
    <location>
        <begin position="415"/>
        <end position="417"/>
    </location>
    <ligand>
        <name>substrate</name>
    </ligand>
</feature>
<feature type="site" description="Important for catalytic activity" evidence="1">
    <location>
        <position position="274"/>
    </location>
</feature>
<protein>
    <recommendedName>
        <fullName>UDP-sulfoquinovose synthase, chloroplastic</fullName>
        <ecNumber>3.13.1.1</ecNumber>
    </recommendedName>
    <alternativeName>
        <fullName>SoSQD1</fullName>
    </alternativeName>
    <alternativeName>
        <fullName>Sulfite:UDP-glucose sulfotransferase</fullName>
    </alternativeName>
    <alternativeName>
        <fullName>Sulfolipid biosynthesis protein</fullName>
    </alternativeName>
</protein>
<reference key="1">
    <citation type="journal article" date="2003" name="Arch. Biochem. Biophys.">
        <title>Native uridine 5'-diphosphate-sulfoquinovose synthase, SQD1, from spinach purifies as a 250-kDa complex.</title>
        <authorList>
            <person name="Shimojima M."/>
            <person name="Benning C."/>
        </authorList>
    </citation>
    <scope>NUCLEOTIDE SEQUENCE [MRNA]</scope>
    <scope>CHARACTERIZATION</scope>
    <scope>SUBCELLULAR LOCATION</scope>
    <source>
        <strain>cv. Melody</strain>
    </source>
</reference>
<reference key="2">
    <citation type="journal article" date="2005" name="Arch. Biochem. Biophys.">
        <title>Ferredoxin-dependent glutamate synthase moonlights in plant sulfolipid biosynthesis by forming a complex with SQD1.</title>
        <authorList>
            <person name="Shimojima M."/>
            <person name="Hoffmann-Benning S."/>
            <person name="Garavito R.M."/>
            <person name="Benning C."/>
        </authorList>
    </citation>
    <scope>INTERACTION WITH FDGOGAT</scope>
    <scope>3D-STRUCTURE MODELING</scope>
</reference>
<keyword id="KW-0150">Chloroplast</keyword>
<keyword id="KW-0378">Hydrolase</keyword>
<keyword id="KW-0520">NAD</keyword>
<keyword id="KW-0934">Plastid</keyword>
<keyword id="KW-1185">Reference proteome</keyword>
<keyword id="KW-0809">Transit peptide</keyword>
<comment type="function">
    <text>Involved in the biosynthesis of sulfolipids found in thylakoid membranes. Converts UDP-glucose and sulfite to the sulfolipid head group precursor UDP-sulfoquinovose. The sulfite is delivered to the reaction center by the FMN-binding domain of FdGOGAT.</text>
</comment>
<comment type="catalytic activity">
    <reaction>
        <text>sulfite + UDP-alpha-D-glucose + H(+) = UDP-alpha-D-6-sulfoquinovose + H2O</text>
        <dbReference type="Rhea" id="RHEA:13197"/>
        <dbReference type="ChEBI" id="CHEBI:15377"/>
        <dbReference type="ChEBI" id="CHEBI:15378"/>
        <dbReference type="ChEBI" id="CHEBI:17359"/>
        <dbReference type="ChEBI" id="CHEBI:58885"/>
        <dbReference type="ChEBI" id="CHEBI:60009"/>
        <dbReference type="EC" id="3.13.1.1"/>
    </reaction>
</comment>
<comment type="cofactor">
    <cofactor>
        <name>NAD(+)</name>
        <dbReference type="ChEBI" id="CHEBI:57540"/>
    </cofactor>
</comment>
<comment type="biophysicochemical properties">
    <kinetics>
        <KM>60 uM for UDP-glucose</KM>
        <KM>5 uM for sulfite</KM>
    </kinetics>
    <phDependence>
        <text>Optimum pH is 8.0-8.5.</text>
    </phDependence>
</comment>
<comment type="subunit">
    <text evidence="4">Homodimer. Interacts with FdGOGAT (via FMN-binding domain).</text>
</comment>
<comment type="subcellular location">
    <subcellularLocation>
        <location evidence="3">Plastid</location>
        <location evidence="3">Chloroplast stroma</location>
    </subcellularLocation>
</comment>
<comment type="PTM">
    <text>The N-terminus is blocked.</text>
</comment>
<comment type="similarity">
    <text evidence="5">Belongs to the NAD(P)-dependent epimerase/dehydratase family.</text>
</comment>
<gene>
    <name type="primary">SQD1</name>
</gene>
<evidence type="ECO:0000250" key="1">
    <source>
        <dbReference type="UniProtKB" id="O48917"/>
    </source>
</evidence>
<evidence type="ECO:0000255" key="2"/>
<evidence type="ECO:0000269" key="3">
    <source>
    </source>
</evidence>
<evidence type="ECO:0000269" key="4">
    <source>
    </source>
</evidence>
<evidence type="ECO:0000305" key="5"/>
<sequence>MAHLLSTSCSMKVSPSEKLSSKCWNIGSTKYPMSFTQQTSKSAFKSLVHQRNNTQKLTVVRATTVPLNQETKAESGTSSFENNGNTSGRKRVMVIGGDGYCGWATALHLSKKNYDVCIVDNLVRRLFDHQLGLDSLTPIASIQNRIRRWQGLTGKTIDLHVGDICDFEFLAETFKSFEPDTVVHFGEQRSAPYSMIDRSRAVYTQQNNVIGTINVLFAIKEFSEECHLVKLGTMGEYGTPNIDIEEGFITITHNGRTDTLPYPKQASSFYHLSKVHDSHNIAFTCKAWGIRATDLNQGVVYGVMTEETAMHEELCNRFDYDAVFGTALNRFCVQAAVGHPLTVYGKGGQTRGYLDIRDTVQCVELAIANPAKLGEFRVFNQFTEQYSVRDLAALVTKAGEKLGLNVETISVPNPRVEAEEHYYNAKHTKLAELGLKPHLLSDSLLDSVLNFAVQYKDRVDTKQIMPSVSWKKIGVKPQTLRA</sequence>
<accession>Q84KI6</accession>
<organism>
    <name type="scientific">Spinacia oleracea</name>
    <name type="common">Spinach</name>
    <dbReference type="NCBI Taxonomy" id="3562"/>
    <lineage>
        <taxon>Eukaryota</taxon>
        <taxon>Viridiplantae</taxon>
        <taxon>Streptophyta</taxon>
        <taxon>Embryophyta</taxon>
        <taxon>Tracheophyta</taxon>
        <taxon>Spermatophyta</taxon>
        <taxon>Magnoliopsida</taxon>
        <taxon>eudicotyledons</taxon>
        <taxon>Gunneridae</taxon>
        <taxon>Pentapetalae</taxon>
        <taxon>Caryophyllales</taxon>
        <taxon>Chenopodiaceae</taxon>
        <taxon>Chenopodioideae</taxon>
        <taxon>Anserineae</taxon>
        <taxon>Spinacia</taxon>
    </lineage>
</organism>